<feature type="transit peptide" description="Mitochondrion" evidence="2">
    <location>
        <begin position="1"/>
        <end position="42"/>
    </location>
</feature>
<feature type="chain" id="PRO_0000459551" description="Acetolactate synthase catalytic subunit, mitochondrial" evidence="2">
    <location>
        <begin position="43"/>
        <end position="694"/>
    </location>
</feature>
<feature type="region of interest" description="Disordered" evidence="3">
    <location>
        <begin position="45"/>
        <end position="69"/>
    </location>
</feature>
<feature type="region of interest" description="Thiamine pyrophosphate binding" evidence="1">
    <location>
        <begin position="505"/>
        <end position="585"/>
    </location>
</feature>
<feature type="compositionally biased region" description="Low complexity" evidence="3">
    <location>
        <begin position="45"/>
        <end position="58"/>
    </location>
</feature>
<feature type="compositionally biased region" description="Polar residues" evidence="3">
    <location>
        <begin position="59"/>
        <end position="69"/>
    </location>
</feature>
<feature type="binding site" evidence="1">
    <location>
        <position position="140"/>
    </location>
    <ligand>
        <name>thiamine diphosphate</name>
        <dbReference type="ChEBI" id="CHEBI:58937"/>
    </ligand>
</feature>
<feature type="binding site" evidence="1">
    <location>
        <position position="242"/>
    </location>
    <ligand>
        <name>FAD</name>
        <dbReference type="ChEBI" id="CHEBI:57692"/>
    </ligand>
</feature>
<feature type="binding site" evidence="1">
    <location>
        <begin position="358"/>
        <end position="379"/>
    </location>
    <ligand>
        <name>FAD</name>
        <dbReference type="ChEBI" id="CHEBI:57692"/>
    </ligand>
</feature>
<feature type="binding site" evidence="1">
    <location>
        <begin position="410"/>
        <end position="429"/>
    </location>
    <ligand>
        <name>FAD</name>
        <dbReference type="ChEBI" id="CHEBI:57692"/>
    </ligand>
</feature>
<feature type="binding site" evidence="1">
    <location>
        <position position="556"/>
    </location>
    <ligand>
        <name>Mg(2+)</name>
        <dbReference type="ChEBI" id="CHEBI:18420"/>
    </ligand>
</feature>
<feature type="binding site" evidence="1">
    <location>
        <position position="583"/>
    </location>
    <ligand>
        <name>Mg(2+)</name>
        <dbReference type="ChEBI" id="CHEBI:18420"/>
    </ligand>
</feature>
<feature type="binding site" evidence="1">
    <location>
        <position position="585"/>
    </location>
    <ligand>
        <name>Mg(2+)</name>
        <dbReference type="ChEBI" id="CHEBI:18420"/>
    </ligand>
</feature>
<accession>A0A2I2F2I5</accession>
<dbReference type="EC" id="2.2.1.6" evidence="4"/>
<dbReference type="EMBL" id="KZ559171">
    <property type="protein sequence ID" value="PLB34855.1"/>
    <property type="molecule type" value="Genomic_DNA"/>
</dbReference>
<dbReference type="SMR" id="A0A2I2F2I5"/>
<dbReference type="STRING" id="41067.A0A2I2F2I5"/>
<dbReference type="OrthoDB" id="16262at2759"/>
<dbReference type="UniPathway" id="UPA00047">
    <property type="reaction ID" value="UER00055"/>
</dbReference>
<dbReference type="UniPathway" id="UPA00049">
    <property type="reaction ID" value="UER00059"/>
</dbReference>
<dbReference type="Proteomes" id="UP000234585">
    <property type="component" value="Unassembled WGS sequence"/>
</dbReference>
<dbReference type="GO" id="GO:0005948">
    <property type="term" value="C:acetolactate synthase complex"/>
    <property type="evidence" value="ECO:0007669"/>
    <property type="project" value="TreeGrafter"/>
</dbReference>
<dbReference type="GO" id="GO:0005739">
    <property type="term" value="C:mitochondrion"/>
    <property type="evidence" value="ECO:0007669"/>
    <property type="project" value="UniProtKB-SubCell"/>
</dbReference>
<dbReference type="GO" id="GO:0003984">
    <property type="term" value="F:acetolactate synthase activity"/>
    <property type="evidence" value="ECO:0007669"/>
    <property type="project" value="UniProtKB-EC"/>
</dbReference>
<dbReference type="GO" id="GO:0050660">
    <property type="term" value="F:flavin adenine dinucleotide binding"/>
    <property type="evidence" value="ECO:0007669"/>
    <property type="project" value="InterPro"/>
</dbReference>
<dbReference type="GO" id="GO:0000287">
    <property type="term" value="F:magnesium ion binding"/>
    <property type="evidence" value="ECO:0007669"/>
    <property type="project" value="InterPro"/>
</dbReference>
<dbReference type="GO" id="GO:0004737">
    <property type="term" value="F:pyruvate decarboxylase activity"/>
    <property type="evidence" value="ECO:0007669"/>
    <property type="project" value="UniProtKB-EC"/>
</dbReference>
<dbReference type="GO" id="GO:0030976">
    <property type="term" value="F:thiamine pyrophosphate binding"/>
    <property type="evidence" value="ECO:0007669"/>
    <property type="project" value="InterPro"/>
</dbReference>
<dbReference type="GO" id="GO:0009097">
    <property type="term" value="P:isoleucine biosynthetic process"/>
    <property type="evidence" value="ECO:0007669"/>
    <property type="project" value="UniProtKB-UniPathway"/>
</dbReference>
<dbReference type="GO" id="GO:0009099">
    <property type="term" value="P:L-valine biosynthetic process"/>
    <property type="evidence" value="ECO:0007669"/>
    <property type="project" value="UniProtKB-UniPathway"/>
</dbReference>
<dbReference type="CDD" id="cd02015">
    <property type="entry name" value="TPP_AHAS"/>
    <property type="match status" value="1"/>
</dbReference>
<dbReference type="CDD" id="cd07035">
    <property type="entry name" value="TPP_PYR_POX_like"/>
    <property type="match status" value="1"/>
</dbReference>
<dbReference type="FunFam" id="3.40.50.1220:FF:000008">
    <property type="entry name" value="Acetolactate synthase"/>
    <property type="match status" value="1"/>
</dbReference>
<dbReference type="FunFam" id="3.40.50.970:FF:000007">
    <property type="entry name" value="Acetolactate synthase"/>
    <property type="match status" value="1"/>
</dbReference>
<dbReference type="FunFam" id="3.40.50.970:FF:000053">
    <property type="entry name" value="Acetolactate synthase, mitochondrial"/>
    <property type="match status" value="1"/>
</dbReference>
<dbReference type="Gene3D" id="3.40.50.970">
    <property type="match status" value="2"/>
</dbReference>
<dbReference type="Gene3D" id="3.40.50.1220">
    <property type="entry name" value="TPP-binding domain"/>
    <property type="match status" value="1"/>
</dbReference>
<dbReference type="InterPro" id="IPR012846">
    <property type="entry name" value="Acetolactate_synth_lsu"/>
</dbReference>
<dbReference type="InterPro" id="IPR039368">
    <property type="entry name" value="AHAS_TPP"/>
</dbReference>
<dbReference type="InterPro" id="IPR029035">
    <property type="entry name" value="DHS-like_NAD/FAD-binding_dom"/>
</dbReference>
<dbReference type="InterPro" id="IPR029061">
    <property type="entry name" value="THDP-binding"/>
</dbReference>
<dbReference type="InterPro" id="IPR012000">
    <property type="entry name" value="Thiamin_PyroP_enz_cen_dom"/>
</dbReference>
<dbReference type="InterPro" id="IPR012001">
    <property type="entry name" value="Thiamin_PyroP_enz_TPP-bd_dom"/>
</dbReference>
<dbReference type="InterPro" id="IPR000399">
    <property type="entry name" value="TPP-bd_CS"/>
</dbReference>
<dbReference type="InterPro" id="IPR045229">
    <property type="entry name" value="TPP_enz"/>
</dbReference>
<dbReference type="InterPro" id="IPR011766">
    <property type="entry name" value="TPP_enzyme_TPP-bd"/>
</dbReference>
<dbReference type="NCBIfam" id="TIGR00118">
    <property type="entry name" value="acolac_lg"/>
    <property type="match status" value="1"/>
</dbReference>
<dbReference type="PANTHER" id="PTHR18968:SF13">
    <property type="entry name" value="ACETOLACTATE SYNTHASE CATALYTIC SUBUNIT, MITOCHONDRIAL"/>
    <property type="match status" value="1"/>
</dbReference>
<dbReference type="PANTHER" id="PTHR18968">
    <property type="entry name" value="THIAMINE PYROPHOSPHATE ENZYMES"/>
    <property type="match status" value="1"/>
</dbReference>
<dbReference type="Pfam" id="PF02775">
    <property type="entry name" value="TPP_enzyme_C"/>
    <property type="match status" value="1"/>
</dbReference>
<dbReference type="Pfam" id="PF00205">
    <property type="entry name" value="TPP_enzyme_M"/>
    <property type="match status" value="1"/>
</dbReference>
<dbReference type="Pfam" id="PF02776">
    <property type="entry name" value="TPP_enzyme_N"/>
    <property type="match status" value="1"/>
</dbReference>
<dbReference type="SUPFAM" id="SSF52467">
    <property type="entry name" value="DHS-like NAD/FAD-binding domain"/>
    <property type="match status" value="1"/>
</dbReference>
<dbReference type="SUPFAM" id="SSF52518">
    <property type="entry name" value="Thiamin diphosphate-binding fold (THDP-binding)"/>
    <property type="match status" value="2"/>
</dbReference>
<dbReference type="PROSITE" id="PS00187">
    <property type="entry name" value="TPP_ENZYMES"/>
    <property type="match status" value="1"/>
</dbReference>
<keyword id="KW-0028">Amino-acid biosynthesis</keyword>
<keyword id="KW-0100">Branched-chain amino acid biosynthesis</keyword>
<keyword id="KW-0274">FAD</keyword>
<keyword id="KW-0285">Flavoprotein</keyword>
<keyword id="KW-0460">Magnesium</keyword>
<keyword id="KW-0479">Metal-binding</keyword>
<keyword id="KW-0496">Mitochondrion</keyword>
<keyword id="KW-1185">Reference proteome</keyword>
<keyword id="KW-0786">Thiamine pyrophosphate</keyword>
<keyword id="KW-0808">Transferase</keyword>
<keyword id="KW-0809">Transit peptide</keyword>
<comment type="function">
    <text evidence="1 4">Acetolactate synthase catalytic subunit, mitochondrial; part of the gene cluster that mediates the biosynthesis of chlorflavonin, a fungal flavonoid with acetolactate synthase inhibitory activity (PubMed:36704842). Is not direcly involved in chlorflavonin biosynthesis but acts as a self-resistant protein that effectively confers chlorflavonin resistance to the native host (PubMed:36704842). As a catalytic subunit of mitochondrial acetolactate synthase, catalyzes the first of a series of common steps in the biosynthesis of the branched-chain amino acids. Catalyzes the irreversible decarboxylation of pyruvate to a bound hydroxyethyl group that then condenses with either a second pyruvate molecule to form 2-acetolactate (AL) or with 2-ketobutyrate to form 2-aceto-2-hydroxybutyrate (AHB). The first product is the precursor for valine and leucine biosynthesis, while the second leads to isoleucine (By similarity).</text>
</comment>
<comment type="catalytic activity">
    <reaction evidence="1">
        <text>2 pyruvate + H(+) = (2S)-2-acetolactate + CO2</text>
        <dbReference type="Rhea" id="RHEA:25249"/>
        <dbReference type="ChEBI" id="CHEBI:15361"/>
        <dbReference type="ChEBI" id="CHEBI:15378"/>
        <dbReference type="ChEBI" id="CHEBI:16526"/>
        <dbReference type="ChEBI" id="CHEBI:58476"/>
        <dbReference type="EC" id="2.2.1.6"/>
    </reaction>
    <physiologicalReaction direction="left-to-right" evidence="1">
        <dbReference type="Rhea" id="RHEA:25250"/>
    </physiologicalReaction>
</comment>
<comment type="catalytic activity">
    <reaction evidence="1">
        <text>2-oxobutanoate + pyruvate + H(+) = (S)-2-ethyl-2-hydroxy-3-oxobutanoate + CO2</text>
        <dbReference type="Rhea" id="RHEA:27654"/>
        <dbReference type="ChEBI" id="CHEBI:15361"/>
        <dbReference type="ChEBI" id="CHEBI:15378"/>
        <dbReference type="ChEBI" id="CHEBI:16526"/>
        <dbReference type="ChEBI" id="CHEBI:16763"/>
        <dbReference type="ChEBI" id="CHEBI:49256"/>
        <dbReference type="EC" id="2.2.1.6"/>
    </reaction>
    <physiologicalReaction direction="left-to-right" evidence="1">
        <dbReference type="Rhea" id="RHEA:27655"/>
    </physiologicalReaction>
</comment>
<comment type="cofactor">
    <cofactor evidence="1">
        <name>Mg(2+)</name>
        <dbReference type="ChEBI" id="CHEBI:18420"/>
    </cofactor>
    <text evidence="1">Binds 1 Mg(2+) ion per subunit.</text>
</comment>
<comment type="cofactor">
    <cofactor evidence="1">
        <name>thiamine diphosphate</name>
        <dbReference type="ChEBI" id="CHEBI:58937"/>
    </cofactor>
    <text evidence="1">Binds 1 thiamine pyrophosphate per subunit.</text>
</comment>
<comment type="pathway">
    <text evidence="1">Amino-acid biosynthesis; L-isoleucine biosynthesis; L-isoleucine from 2-oxobutanoate: step 1/4.</text>
</comment>
<comment type="pathway">
    <text evidence="1">Amino-acid biosynthesis; L-valine biosynthesis; L-valine from pyruvate: step 1/4.</text>
</comment>
<comment type="subunit">
    <text evidence="1">Homodimer.</text>
</comment>
<comment type="subcellular location">
    <subcellularLocation>
        <location evidence="2">Mitochondrion</location>
    </subcellularLocation>
</comment>
<comment type="disruption phenotype">
    <text evidence="4">Leads to slow growth on a potato dextrose agar (PDA) plate and fails to grow at all on PDA containing chlorflavonin.</text>
</comment>
<comment type="similarity">
    <text evidence="6">Belongs to the TPP enzyme family.</text>
</comment>
<proteinExistence type="inferred from homology"/>
<gene>
    <name evidence="5" type="primary">cfoL</name>
    <name type="ORF">BDW47DRAFT_70763</name>
</gene>
<organism>
    <name type="scientific">Aspergillus candidus</name>
    <dbReference type="NCBI Taxonomy" id="41067"/>
    <lineage>
        <taxon>Eukaryota</taxon>
        <taxon>Fungi</taxon>
        <taxon>Dikarya</taxon>
        <taxon>Ascomycota</taxon>
        <taxon>Pezizomycotina</taxon>
        <taxon>Eurotiomycetes</taxon>
        <taxon>Eurotiomycetidae</taxon>
        <taxon>Eurotiales</taxon>
        <taxon>Aspergillaceae</taxon>
        <taxon>Aspergillus</taxon>
        <taxon>Aspergillus subgen. Circumdati</taxon>
    </lineage>
</organism>
<protein>
    <recommendedName>
        <fullName evidence="5">Acetolactate synthase catalytic subunit, mitochondrial</fullName>
        <ecNumber evidence="4">2.2.1.6</ecNumber>
    </recommendedName>
    <alternativeName>
        <fullName evidence="5">Acetohydroxy-acid synthase catalytic subunit</fullName>
        <shortName evidence="5">AHAS</shortName>
        <shortName evidence="5">ALS</shortName>
    </alternativeName>
    <alternativeName>
        <fullName evidence="5">Chlorflavonin biosynthesis cluster protein L</fullName>
    </alternativeName>
</protein>
<reference key="1">
    <citation type="submission" date="2017-12" db="EMBL/GenBank/DDBJ databases">
        <authorList>
            <consortium name="DOE Joint Genome Institute"/>
            <person name="Haridas S."/>
            <person name="Kjaerbolling I."/>
            <person name="Vesth T.C."/>
            <person name="Frisvad J.C."/>
            <person name="Nybo J.L."/>
            <person name="Theobald S."/>
            <person name="Kuo A."/>
            <person name="Bowyer P."/>
            <person name="Matsuda Y."/>
            <person name="Mondo S."/>
            <person name="Lyhne E.K."/>
            <person name="Kogle M.E."/>
            <person name="Clum A."/>
            <person name="Lipzen A."/>
            <person name="Salamov A."/>
            <person name="Ngan C.Y."/>
            <person name="Daum C."/>
            <person name="Chiniquy J."/>
            <person name="Barry K."/>
            <person name="LaButti K."/>
            <person name="Simmons B.A."/>
            <person name="Magnuson J.K."/>
            <person name="Mortensen U.H."/>
            <person name="Larsen T.O."/>
            <person name="Grigoriev I.V."/>
            <person name="Baker S.E."/>
            <person name="Andersen M.R."/>
            <person name="Nordberg H.P."/>
            <person name="Cantor M.N."/>
            <person name="Hua S.X."/>
        </authorList>
    </citation>
    <scope>NUCLEOTIDE SEQUENCE [LARGE SCALE GENOMIC DNA]</scope>
    <source>
        <strain>CBS 102.13</strain>
    </source>
</reference>
<reference key="2">
    <citation type="journal article" date="2023" name="Angew. Chem. Int. Ed.">
        <title>Discovery of a Unique Flavonoid Biosynthesis Mechanism in Fungi by Genome Mining.</title>
        <authorList>
            <person name="Zhang W."/>
            <person name="Zhang X."/>
            <person name="Feng D."/>
            <person name="Liang Y."/>
            <person name="Wu Z."/>
            <person name="Du S."/>
            <person name="Zhou Y."/>
            <person name="Geng C."/>
            <person name="Men P."/>
            <person name="Fu C."/>
            <person name="Huang X."/>
            <person name="Lu X."/>
        </authorList>
    </citation>
    <scope>FUNCTION</scope>
    <scope>DISRUPTION PHENOTYPE</scope>
    <scope>PATHWAY</scope>
</reference>
<name>CFOL_ASPCN</name>
<evidence type="ECO:0000250" key="1">
    <source>
        <dbReference type="UniProtKB" id="P07342"/>
    </source>
</evidence>
<evidence type="ECO:0000255" key="2"/>
<evidence type="ECO:0000256" key="3">
    <source>
        <dbReference type="SAM" id="MobiDB-lite"/>
    </source>
</evidence>
<evidence type="ECO:0000269" key="4">
    <source>
    </source>
</evidence>
<evidence type="ECO:0000303" key="5">
    <source>
    </source>
</evidence>
<evidence type="ECO:0000305" key="6"/>
<sequence length="694" mass="75426">MLRSRQATNALRAVGQTRPLRSQTAVAFTQSLNKVPSNRRSEATVATASSTASGAFNSQVRPTPSPTFNQYDSKVQPLTGMSRNVTDESFIGKTGGEIFHDMMLRQGVKHIFGYPGGAILPVFDAIYNSTHFDFILPRHEQGAGHMAEGYARASGKPGVVLVTSGPGATNIVTPMQDALLDGTPMVVFCGQVPTTSIGSDAFQEADIVGISRPCTKWNVMVKNIAELPRRINEAFQIATTGRPGPVLVDLPKDVTAGILRRAIPTDAAIPSLPSASIQDAMDLNHKQLEASIARVAKLVNMAKQPVIYAGQGVIQSESGPELLKKLSDLASIPVTTTLQGLGGFDELDYKSLHMLGMHGSAYANMAMQEADLIIALGGRFDDRVTLNVSKFAPGARAAAAENRGGIVQFEIMPKNINKVVEATEAIVGDVGANLRLLLPHVESRSTDDRSAWYTKIDAWKKKWPLSDYQKTERHGLIKPQTLIEELSNLCADRKEKTYITTGVGQHQMWTAQHFRWRHPRTMITSGGLGTMGYGLPAAIGAKVAQPDALVVDIDGDASFNMTLTELSTAAQFNIGVKVIVLNNEEQGMVTQWQNLFYEDRYAHTHQANPDFIKIADAMGIQGQRVADPTKIKESLQWLIDTDGPALLEVITDKKVPVLPMVPGGCGLHEFIVFNPEDEKTRRGLMRERTCGLHG</sequence>